<sequence>MGQTAGDLGWRLSLLLLPLLLVQAGVWGFPRPPGRPQLSLQELRREFTVSLHLARKLLSEVRGQAHRFAESHLPGVNLYLLPLGEQLPDVSLTFQAWRRLSDPERLCFISTTLQPFHALLGGLGTQGRWTNMERMQLWAMRLDLRDLQRHLRFQVLAAGFNLPEEEEEEEEEEEEERKGLLPGALGSALQGPAQVSWPQLLSTYRLLHSLELVLSRAVRELLLLSKAGHSVWPLGFPTLSPQP</sequence>
<protein>
    <recommendedName>
        <fullName>Interleukin-27 subunit alpha</fullName>
        <shortName>IL-27 subunit alpha</shortName>
        <shortName>IL-27-A</shortName>
        <shortName>IL27-A</shortName>
    </recommendedName>
    <alternativeName>
        <fullName>Interleukin-30</fullName>
    </alternativeName>
    <alternativeName>
        <fullName>p28</fullName>
    </alternativeName>
</protein>
<dbReference type="EMBL" id="AY099296">
    <property type="protein sequence ID" value="AAM34498.1"/>
    <property type="molecule type" value="mRNA"/>
</dbReference>
<dbReference type="EMBL" id="EF064720">
    <property type="protein sequence ID" value="ABK41903.1"/>
    <property type="molecule type" value="Genomic_DNA"/>
</dbReference>
<dbReference type="EMBL" id="CH471279">
    <property type="protein sequence ID" value="EAW52277.1"/>
    <property type="molecule type" value="Genomic_DNA"/>
</dbReference>
<dbReference type="EMBL" id="BC062422">
    <property type="protein sequence ID" value="AAH62422.1"/>
    <property type="molecule type" value="mRNA"/>
</dbReference>
<dbReference type="CCDS" id="CCDS10633.1"/>
<dbReference type="RefSeq" id="NP_663634.2">
    <property type="nucleotide sequence ID" value="NM_145659.3"/>
</dbReference>
<dbReference type="PDB" id="7U7N">
    <property type="method" value="EM"/>
    <property type="resolution" value="3.47 A"/>
    <property type="chains" value="D=29-243"/>
</dbReference>
<dbReference type="PDB" id="7ZXK">
    <property type="method" value="X-ray"/>
    <property type="resolution" value="2.20 A"/>
    <property type="chains" value="A/C=29-243"/>
</dbReference>
<dbReference type="PDB" id="8D85">
    <property type="method" value="EM"/>
    <property type="resolution" value="3.81 A"/>
    <property type="chains" value="D=29-243"/>
</dbReference>
<dbReference type="PDB" id="8XWY">
    <property type="method" value="X-ray"/>
    <property type="resolution" value="3.40 A"/>
    <property type="chains" value="A/D=29-243"/>
</dbReference>
<dbReference type="PDBsum" id="7U7N"/>
<dbReference type="PDBsum" id="7ZXK"/>
<dbReference type="PDBsum" id="8D85"/>
<dbReference type="PDBsum" id="8XWY"/>
<dbReference type="EMDB" id="EMD-26382"/>
<dbReference type="EMDB" id="EMD-27246"/>
<dbReference type="EMDB" id="EMD-27247"/>
<dbReference type="SMR" id="Q8NEV9"/>
<dbReference type="BioGRID" id="128924">
    <property type="interactions" value="5"/>
</dbReference>
<dbReference type="ComplexPortal" id="CPX-8822">
    <property type="entry name" value="Interleukin-27 complex"/>
</dbReference>
<dbReference type="ComplexPortal" id="CPX-8836">
    <property type="entry name" value="Interleukin-27 receptor-ligand complex"/>
</dbReference>
<dbReference type="CORUM" id="Q8NEV9"/>
<dbReference type="DIP" id="DIP-59473N"/>
<dbReference type="FunCoup" id="Q8NEV9">
    <property type="interactions" value="392"/>
</dbReference>
<dbReference type="IntAct" id="Q8NEV9">
    <property type="interactions" value="4"/>
</dbReference>
<dbReference type="STRING" id="9606.ENSP00000349365"/>
<dbReference type="iPTMnet" id="Q8NEV9"/>
<dbReference type="PhosphoSitePlus" id="Q8NEV9"/>
<dbReference type="BioMuta" id="IL27"/>
<dbReference type="DMDM" id="182701368"/>
<dbReference type="jPOST" id="Q8NEV9"/>
<dbReference type="MassIVE" id="Q8NEV9"/>
<dbReference type="PaxDb" id="9606-ENSP00000349365"/>
<dbReference type="PeptideAtlas" id="Q8NEV9"/>
<dbReference type="ProteomicsDB" id="73223"/>
<dbReference type="Antibodypedia" id="13022">
    <property type="antibodies" value="607 antibodies from 40 providers"/>
</dbReference>
<dbReference type="DNASU" id="246778"/>
<dbReference type="Ensembl" id="ENST00000356897.1">
    <property type="protein sequence ID" value="ENSP00000349365.1"/>
    <property type="gene ID" value="ENSG00000197272.2"/>
</dbReference>
<dbReference type="GeneID" id="246778"/>
<dbReference type="KEGG" id="hsa:246778"/>
<dbReference type="MANE-Select" id="ENST00000356897.1">
    <property type="protein sequence ID" value="ENSP00000349365.1"/>
    <property type="RefSeq nucleotide sequence ID" value="NM_145659.3"/>
    <property type="RefSeq protein sequence ID" value="NP_663634.2"/>
</dbReference>
<dbReference type="UCSC" id="uc002dqc.3">
    <property type="organism name" value="human"/>
</dbReference>
<dbReference type="AGR" id="HGNC:19157"/>
<dbReference type="CTD" id="246778"/>
<dbReference type="DisGeNET" id="246778"/>
<dbReference type="GeneCards" id="IL27"/>
<dbReference type="HGNC" id="HGNC:19157">
    <property type="gene designation" value="IL27"/>
</dbReference>
<dbReference type="HPA" id="ENSG00000197272">
    <property type="expression patterns" value="Tissue enriched (liver)"/>
</dbReference>
<dbReference type="MIM" id="608273">
    <property type="type" value="gene"/>
</dbReference>
<dbReference type="neXtProt" id="NX_Q8NEV9"/>
<dbReference type="OpenTargets" id="ENSG00000197272"/>
<dbReference type="PharmGKB" id="PA134870478"/>
<dbReference type="VEuPathDB" id="HostDB:ENSG00000197272"/>
<dbReference type="eggNOG" id="ENOG502SVMM">
    <property type="taxonomic scope" value="Eukaryota"/>
</dbReference>
<dbReference type="GeneTree" id="ENSGT00390000018206"/>
<dbReference type="HOGENOM" id="CLU_102031_0_0_1"/>
<dbReference type="InParanoid" id="Q8NEV9"/>
<dbReference type="OMA" id="LCFLSMM"/>
<dbReference type="OrthoDB" id="9446539at2759"/>
<dbReference type="PAN-GO" id="Q8NEV9">
    <property type="GO annotations" value="4 GO annotations based on evolutionary models"/>
</dbReference>
<dbReference type="PhylomeDB" id="Q8NEV9"/>
<dbReference type="TreeFam" id="TF337498"/>
<dbReference type="PathwayCommons" id="Q8NEV9"/>
<dbReference type="Reactome" id="R-HSA-9020956">
    <property type="pathway name" value="Interleukin-27 signaling"/>
</dbReference>
<dbReference type="SignaLink" id="Q8NEV9"/>
<dbReference type="SIGNOR" id="Q8NEV9"/>
<dbReference type="BioGRID-ORCS" id="246778">
    <property type="hits" value="12 hits in 1137 CRISPR screens"/>
</dbReference>
<dbReference type="ChiTaRS" id="IL27">
    <property type="organism name" value="human"/>
</dbReference>
<dbReference type="GenomeRNAi" id="246778"/>
<dbReference type="Pharos" id="Q8NEV9">
    <property type="development level" value="Tbio"/>
</dbReference>
<dbReference type="PRO" id="PR:Q8NEV9"/>
<dbReference type="Proteomes" id="UP000005640">
    <property type="component" value="Chromosome 16"/>
</dbReference>
<dbReference type="RNAct" id="Q8NEV9">
    <property type="molecule type" value="protein"/>
</dbReference>
<dbReference type="Bgee" id="ENSG00000197272">
    <property type="expression patterns" value="Expressed in right lobe of liver and 95 other cell types or tissues"/>
</dbReference>
<dbReference type="ExpressionAtlas" id="Q8NEV9">
    <property type="expression patterns" value="baseline and differential"/>
</dbReference>
<dbReference type="GO" id="GO:0009986">
    <property type="term" value="C:cell surface"/>
    <property type="evidence" value="ECO:0007669"/>
    <property type="project" value="Ensembl"/>
</dbReference>
<dbReference type="GO" id="GO:0005829">
    <property type="term" value="C:cytosol"/>
    <property type="evidence" value="ECO:0000304"/>
    <property type="project" value="Reactome"/>
</dbReference>
<dbReference type="GO" id="GO:0005788">
    <property type="term" value="C:endoplasmic reticulum lumen"/>
    <property type="evidence" value="ECO:0000304"/>
    <property type="project" value="Reactome"/>
</dbReference>
<dbReference type="GO" id="GO:0005576">
    <property type="term" value="C:extracellular region"/>
    <property type="evidence" value="ECO:0000304"/>
    <property type="project" value="Reactome"/>
</dbReference>
<dbReference type="GO" id="GO:0005615">
    <property type="term" value="C:extracellular space"/>
    <property type="evidence" value="ECO:0000250"/>
    <property type="project" value="UniProtKB"/>
</dbReference>
<dbReference type="GO" id="GO:0005125">
    <property type="term" value="F:cytokine activity"/>
    <property type="evidence" value="ECO:0007669"/>
    <property type="project" value="UniProtKB-KW"/>
</dbReference>
<dbReference type="GO" id="GO:0045523">
    <property type="term" value="F:interleukin-27 receptor binding"/>
    <property type="evidence" value="ECO:0000250"/>
    <property type="project" value="UniProtKB"/>
</dbReference>
<dbReference type="GO" id="GO:0005102">
    <property type="term" value="F:signaling receptor binding"/>
    <property type="evidence" value="ECO:0000250"/>
    <property type="project" value="UniProtKB"/>
</dbReference>
<dbReference type="GO" id="GO:0006954">
    <property type="term" value="P:inflammatory response"/>
    <property type="evidence" value="ECO:0007669"/>
    <property type="project" value="UniProtKB-KW"/>
</dbReference>
<dbReference type="GO" id="GO:0045087">
    <property type="term" value="P:innate immune response"/>
    <property type="evidence" value="ECO:0007669"/>
    <property type="project" value="UniProtKB-KW"/>
</dbReference>
<dbReference type="GO" id="GO:0002230">
    <property type="term" value="P:positive regulation of defense response to virus by host"/>
    <property type="evidence" value="ECO:0007669"/>
    <property type="project" value="Ensembl"/>
</dbReference>
<dbReference type="GO" id="GO:0032729">
    <property type="term" value="P:positive regulation of type II interferon production"/>
    <property type="evidence" value="ECO:0000314"/>
    <property type="project" value="UniProtKB"/>
</dbReference>
<dbReference type="GO" id="GO:0042129">
    <property type="term" value="P:regulation of T cell proliferation"/>
    <property type="evidence" value="ECO:0000250"/>
    <property type="project" value="UniProtKB"/>
</dbReference>
<dbReference type="GO" id="GO:0045625">
    <property type="term" value="P:regulation of T-helper 1 cell differentiation"/>
    <property type="evidence" value="ECO:0000314"/>
    <property type="project" value="UniProtKB"/>
</dbReference>
<dbReference type="GO" id="GO:0140459">
    <property type="term" value="P:response to Gram-positive bacterium"/>
    <property type="evidence" value="ECO:0007669"/>
    <property type="project" value="Ensembl"/>
</dbReference>
<dbReference type="FunFam" id="1.20.1250.10:FF:000035">
    <property type="entry name" value="Interleukin-27 subunit alpha"/>
    <property type="match status" value="1"/>
</dbReference>
<dbReference type="Gene3D" id="1.20.1250.10">
    <property type="match status" value="1"/>
</dbReference>
<dbReference type="InterPro" id="IPR009079">
    <property type="entry name" value="4_helix_cytokine-like_core"/>
</dbReference>
<dbReference type="InterPro" id="IPR026207">
    <property type="entry name" value="IL-27_alpha"/>
</dbReference>
<dbReference type="PANTHER" id="PTHR20879">
    <property type="entry name" value="INTERLEUKIN-27 SUBUNIT ALPHA"/>
    <property type="match status" value="1"/>
</dbReference>
<dbReference type="PANTHER" id="PTHR20879:SF1">
    <property type="entry name" value="INTERLEUKIN-27 SUBUNIT ALPHA"/>
    <property type="match status" value="1"/>
</dbReference>
<gene>
    <name type="primary">IL27</name>
    <name type="synonym">IL27A</name>
    <name type="synonym">IL30</name>
</gene>
<organism>
    <name type="scientific">Homo sapiens</name>
    <name type="common">Human</name>
    <dbReference type="NCBI Taxonomy" id="9606"/>
    <lineage>
        <taxon>Eukaryota</taxon>
        <taxon>Metazoa</taxon>
        <taxon>Chordata</taxon>
        <taxon>Craniata</taxon>
        <taxon>Vertebrata</taxon>
        <taxon>Euteleostomi</taxon>
        <taxon>Mammalia</taxon>
        <taxon>Eutheria</taxon>
        <taxon>Euarchontoglires</taxon>
        <taxon>Primates</taxon>
        <taxon>Haplorrhini</taxon>
        <taxon>Catarrhini</taxon>
        <taxon>Hominidae</taxon>
        <taxon>Homo</taxon>
    </lineage>
</organism>
<name>IL27A_HUMAN</name>
<evidence type="ECO:0000255" key="1"/>
<evidence type="ECO:0000269" key="2">
    <source>
    </source>
</evidence>
<evidence type="ECO:0000269" key="3">
    <source>
    </source>
</evidence>
<evidence type="ECO:0000269" key="4">
    <source>
    </source>
</evidence>
<evidence type="ECO:0000269" key="5">
    <source>
    </source>
</evidence>
<evidence type="ECO:0000269" key="6">
    <source>
    </source>
</evidence>
<evidence type="ECO:0000269" key="7">
    <source>
    </source>
</evidence>
<evidence type="ECO:0000305" key="8"/>
<evidence type="ECO:0000305" key="9">
    <source>
    </source>
</evidence>
<evidence type="ECO:0007829" key="10">
    <source>
        <dbReference type="PDB" id="7U7N"/>
    </source>
</evidence>
<evidence type="ECO:0007829" key="11">
    <source>
        <dbReference type="PDB" id="7ZXK"/>
    </source>
</evidence>
<comment type="function">
    <text evidence="2 3 5 7">Associates with EBI3 to form the IL-27 interleukin, a heterodimeric cytokine which functions in innate immunity. IL-27 has pro- and anti-inflammatory properties, that can regulate T-helper cell development, suppress T-cell proliferation, stimulate cytotoxic T-cell activity, induce isotype switching in B-cells, and that has diverse effects on innate immune cells. Among its target cells are CD4 T-helper cells which can differentiate in type 1 effector cells (TH1), type 2 effector cells (TH2) and IL17 producing helper T-cells (TH17). It drives rapid clonal expansion of naive but not memory CD4 T-cells. It also strongly synergizes with IL-12 to trigger interferon-gamma/IFN-gamma production of naive CD4 T-cells, binds to the cytokine receptor WSX-1/TCCR which appears to be required but not sufficient for IL-27-mediated signal transduction. IL-27 potentiate the early phase of TH1 response and suppress TH2 and TH17 differentiation. It induces the differentiation of TH1 cells via two distinct pathways, p38 MAPK/TBX21- and ICAM1/ITGAL/ERK-dependent pathways. It also induces STAT1, STAT3, STAT4 and STAT5 phosphorylation and activates TBX21/T-Bet via STAT1 with resulting IL12RB2 up-regulation, an event crucial to TH1 cell commitment. It suppresses the expression of GATA3, the inhibitor TH1 cells development. In CD8 T-cells, it activates STATs as well as GZMB. IL-27 reveals to be a potent inhibitor of TH17 cell development and of IL-17 production. Indeed IL27 alone is also able to inhibit the production of IL17 by CD4 and CD8 T-cells. While IL-27 suppressed the development of pro-inflammatory Th17 cells via STAT1, it inhibits the development of anti-inflammatory inducible regulatory T-cells, iTreg, independently of STAT1. IL-27 also has an effect on cytokine production, it suppresses pro-inflammatory cytokine production such as IL2, IL4, IL5 and IL6 and activates suppressors of cytokine signaling such as SOCS1 and SOCS3. Apart from suppression of cytokine production, IL-27 also antagonizes the effects of some cytokines such as IL6 through direct effects on T-cells. Another important role of IL-27 is its antitumor activity as well as its antiangiogenic activity with activation of production of antiangiogenic chemokines such as IP-10/CXCL10 and MIG/CXCL9. In vein endothelial cells, it induces IRF1/interferon regulatory factor 1 and increase the expression of MHC class II transactivator/CIITA with resulting up-regulation of major histocompatibility complex class II. IL-27 also demonstrates antiviral activity with inhibitory properties on HIV-1 replication.</text>
</comment>
<comment type="subunit">
    <text evidence="2">Heterodimer with EBI3; not disulfide-linked. This heterodimer is known as interleukin IL-27.</text>
</comment>
<comment type="interaction">
    <interactant intactId="EBI-15887997">
        <id>Q8NEV9</id>
    </interactant>
    <interactant intactId="EBI-15587902">
        <id>O75462</id>
        <label>CRLF1</label>
    </interactant>
    <organismsDiffer>false</organismsDiffer>
    <experiments>2</experiments>
</comment>
<comment type="interaction">
    <interactant intactId="EBI-15887997">
        <id>Q8NEV9</id>
    </interactant>
    <interactant intactId="EBI-742959">
        <id>Q14213</id>
        <label>EBI3</label>
    </interactant>
    <organismsDiffer>false</organismsDiffer>
    <experiments>2</experiments>
</comment>
<comment type="subcellular location">
    <subcellularLocation>
        <location evidence="2">Secreted</location>
    </subcellularLocation>
    <text>Does not seem to be secreted without coexpression of EBI3.</text>
</comment>
<comment type="tissue specificity">
    <text evidence="2">Expressed in monocytes and in placenta.</text>
</comment>
<comment type="induction">
    <text evidence="2">Transiently induced by bacterial lipopolysaccharides (LPS) stimulation in monocytes.</text>
</comment>
<comment type="PTM">
    <text evidence="9">O-glycosylated.</text>
</comment>
<comment type="similarity">
    <text evidence="8">Belongs to the IL-6 superfamily.</text>
</comment>
<comment type="online information" name="Wikipedia">
    <link uri="https://en.wikipedia.org/wiki/Interleukin_27"/>
    <text>Interleukin-27 entry</text>
</comment>
<accession>Q8NEV9</accession>
<accession>A0N0L2</accession>
<accession>Q6P676</accession>
<feature type="signal peptide" evidence="1">
    <location>
        <begin position="1"/>
        <end position="28"/>
    </location>
</feature>
<feature type="chain" id="PRO_0000320139" description="Interleukin-27 subunit alpha">
    <location>
        <begin position="29"/>
        <end position="243"/>
    </location>
</feature>
<feature type="sequence variant" id="VAR_039140" description="In dbSNP:rs17855750." evidence="4 6">
    <original>S</original>
    <variation>A</variation>
    <location>
        <position position="59"/>
    </location>
</feature>
<feature type="sequence variant" id="VAR_039141" description="In dbSNP:rs181206." evidence="2 6">
    <original>L</original>
    <variation>P</variation>
    <location>
        <position position="119"/>
    </location>
</feature>
<feature type="helix" evidence="11">
    <location>
        <begin position="40"/>
        <end position="72"/>
    </location>
</feature>
<feature type="helix" evidence="10">
    <location>
        <begin position="78"/>
        <end position="80"/>
    </location>
</feature>
<feature type="strand" evidence="10">
    <location>
        <begin position="85"/>
        <end position="87"/>
    </location>
</feature>
<feature type="helix" evidence="11">
    <location>
        <begin position="94"/>
        <end position="98"/>
    </location>
</feature>
<feature type="helix" evidence="11">
    <location>
        <begin position="102"/>
        <end position="111"/>
    </location>
</feature>
<feature type="helix" evidence="11">
    <location>
        <begin position="114"/>
        <end position="119"/>
    </location>
</feature>
<feature type="helix" evidence="11">
    <location>
        <begin position="120"/>
        <end position="122"/>
    </location>
</feature>
<feature type="turn" evidence="11">
    <location>
        <begin position="123"/>
        <end position="125"/>
    </location>
</feature>
<feature type="strand" evidence="11">
    <location>
        <begin position="126"/>
        <end position="128"/>
    </location>
</feature>
<feature type="helix" evidence="11">
    <location>
        <begin position="131"/>
        <end position="157"/>
    </location>
</feature>
<feature type="helix" evidence="10">
    <location>
        <begin position="166"/>
        <end position="178"/>
    </location>
</feature>
<feature type="helix" evidence="11">
    <location>
        <begin position="199"/>
        <end position="225"/>
    </location>
</feature>
<keyword id="KW-0002">3D-structure</keyword>
<keyword id="KW-0930">Antiviral protein</keyword>
<keyword id="KW-0202">Cytokine</keyword>
<keyword id="KW-0325">Glycoprotein</keyword>
<keyword id="KW-0391">Immunity</keyword>
<keyword id="KW-0395">Inflammatory response</keyword>
<keyword id="KW-0399">Innate immunity</keyword>
<keyword id="KW-1185">Reference proteome</keyword>
<keyword id="KW-0964">Secreted</keyword>
<keyword id="KW-0732">Signal</keyword>
<reference key="1">
    <citation type="journal article" date="2002" name="Immunity">
        <title>IL-27, a heterodimeric cytokine composed of EBI3 and p28 protein, induces proliferation of naive CD4(+) T cells.</title>
        <authorList>
            <person name="Pflanz S."/>
            <person name="Timans J.C."/>
            <person name="Cheung J."/>
            <person name="Rosales R."/>
            <person name="Kanzler H."/>
            <person name="Gilbert J."/>
            <person name="Hibbert L."/>
            <person name="Churakova T."/>
            <person name="Travis M."/>
            <person name="Vaisberg E."/>
            <person name="Blumenschein W.M."/>
            <person name="Mattson J.D."/>
            <person name="Wagner J.L."/>
            <person name="To W."/>
            <person name="Zurawski S."/>
            <person name="McClanahan T.K."/>
            <person name="Gorman D.M."/>
            <person name="Bazan J.F."/>
            <person name="de Waal Malefyt R."/>
            <person name="Rennick D."/>
            <person name="Kastelein R.A."/>
        </authorList>
    </citation>
    <scope>NUCLEOTIDE SEQUENCE [MRNA]</scope>
    <scope>FUNCTION</scope>
    <scope>GLYCOSYLATION</scope>
    <scope>SUBCELLULAR LOCATION</scope>
    <scope>TISSUE SPECIFICITY</scope>
    <scope>INDUCTION</scope>
    <scope>SUBUNIT</scope>
    <scope>VARIANT PRO-119</scope>
</reference>
<reference key="2">
    <citation type="submission" date="2006-10" db="EMBL/GenBank/DDBJ databases">
        <authorList>
            <person name="Livingston R.J."/>
            <person name="Shaffer T."/>
            <person name="McFarland I."/>
            <person name="Nguyen C.P."/>
            <person name="Stanaway I.B."/>
            <person name="Rajkumar N."/>
            <person name="Johnson E.J."/>
            <person name="da Ponte S.H."/>
            <person name="Willa H."/>
            <person name="Ahearn M.O."/>
            <person name="Bertucci C."/>
            <person name="Acklestad J."/>
            <person name="Carroll A."/>
            <person name="Swanson J."/>
            <person name="Gildersleeve H.I."/>
            <person name="Nickerson D.A."/>
        </authorList>
    </citation>
    <scope>NUCLEOTIDE SEQUENCE [GENOMIC DNA]</scope>
</reference>
<reference key="3">
    <citation type="submission" date="2005-07" db="EMBL/GenBank/DDBJ databases">
        <authorList>
            <person name="Mural R.J."/>
            <person name="Istrail S."/>
            <person name="Sutton G.G."/>
            <person name="Florea L."/>
            <person name="Halpern A.L."/>
            <person name="Mobarry C.M."/>
            <person name="Lippert R."/>
            <person name="Walenz B."/>
            <person name="Shatkay H."/>
            <person name="Dew I."/>
            <person name="Miller J.R."/>
            <person name="Flanigan M.J."/>
            <person name="Edwards N.J."/>
            <person name="Bolanos R."/>
            <person name="Fasulo D."/>
            <person name="Halldorsson B.V."/>
            <person name="Hannenhalli S."/>
            <person name="Turner R."/>
            <person name="Yooseph S."/>
            <person name="Lu F."/>
            <person name="Nusskern D.R."/>
            <person name="Shue B.C."/>
            <person name="Zheng X.H."/>
            <person name="Zhong F."/>
            <person name="Delcher A.L."/>
            <person name="Huson D.H."/>
            <person name="Kravitz S.A."/>
            <person name="Mouchard L."/>
            <person name="Reinert K."/>
            <person name="Remington K.A."/>
            <person name="Clark A.G."/>
            <person name="Waterman M.S."/>
            <person name="Eichler E.E."/>
            <person name="Adams M.D."/>
            <person name="Hunkapiller M.W."/>
            <person name="Myers E.W."/>
            <person name="Venter J.C."/>
        </authorList>
    </citation>
    <scope>NUCLEOTIDE SEQUENCE [LARGE SCALE GENOMIC DNA]</scope>
</reference>
<reference key="4">
    <citation type="journal article" date="2004" name="Genome Res.">
        <title>The status, quality, and expansion of the NIH full-length cDNA project: the Mammalian Gene Collection (MGC).</title>
        <authorList>
            <consortium name="The MGC Project Team"/>
        </authorList>
    </citation>
    <scope>NUCLEOTIDE SEQUENCE [LARGE SCALE MRNA]</scope>
    <scope>VARIANT ALA-59</scope>
    <source>
        <tissue>Lung</tissue>
    </source>
</reference>
<reference key="5">
    <citation type="journal article" date="2003" name="J. Interferon Cytokine Res.">
        <title>IL-27 and IFN-alpha signal via Stat1 and Stat3 and induce T-Bet and IL-12Rbeta2 in naive T cells.</title>
        <authorList>
            <person name="Hibbert L."/>
            <person name="Pflanz S."/>
            <person name="De Waal Malefyt R."/>
            <person name="Kastelein R.A."/>
        </authorList>
    </citation>
    <scope>FUNCTION</scope>
</reference>
<reference key="6">
    <citation type="journal article" date="2007" name="Blood">
        <title>Noninfectious papilloma virus-like particles inhibit HIV-1 replication: implications for immune control of HIV-1 infection by IL-27.</title>
        <authorList>
            <person name="Fakruddin J.M."/>
            <person name="Lempicki R.A."/>
            <person name="Gorelick R.J."/>
            <person name="Yang J."/>
            <person name="Adelsberger J.W."/>
            <person name="Garcia-Pineres A.J."/>
            <person name="Pinto L.A."/>
            <person name="Lane H.C."/>
            <person name="Imamichi T."/>
        </authorList>
    </citation>
    <scope>FUNCTION</scope>
</reference>
<reference key="7">
    <citation type="journal article" date="2007" name="Hum. Immunol.">
        <title>Interleukin-27 upregulates major histocompatibility complex class II expression in primary human endothelial cells through induction of major histocompatibility complex class II transactivator.</title>
        <authorList>
            <person name="Feng X.M."/>
            <person name="Chen X.L."/>
            <person name="Liu N."/>
            <person name="Chen Z."/>
            <person name="Zhou Y.L."/>
            <person name="Han Z.B."/>
            <person name="Zhang L."/>
            <person name="Han Z.C."/>
        </authorList>
    </citation>
    <scope>FUNCTION</scope>
</reference>
<reference key="8">
    <citation type="journal article" date="2007" name="J. Mol. Med.">
        <title>The biology and therapeutic potential of interleukin 27.</title>
        <authorList>
            <person name="Batten M."/>
            <person name="Ghilardi N."/>
        </authorList>
    </citation>
    <scope>REVIEW</scope>
</reference>
<reference key="9">
    <citation type="journal article" date="2007" name="J. Hum. Genet.">
        <title>Identification of polymorphisms in human interleukin-27 and their association with asthma in a Korean population.</title>
        <authorList>
            <person name="Chae S.-C."/>
            <person name="Li C.-S."/>
            <person name="Kim K.M."/>
            <person name="Yang J.Y."/>
            <person name="Zhang Q."/>
            <person name="Lee Y.-C."/>
            <person name="Yang Y.-S."/>
            <person name="Chung H.-T."/>
        </authorList>
    </citation>
    <scope>VARIANTS ALA-59 AND PRO-119</scope>
</reference>
<proteinExistence type="evidence at protein level"/>